<proteinExistence type="inferred from homology"/>
<keyword id="KW-0479">Metal-binding</keyword>
<keyword id="KW-0480">Metal-thiolate cluster</keyword>
<keyword id="KW-1185">Reference proteome</keyword>
<accession>Q43512</accession>
<comment type="function">
    <text>Metallothioneins have a high content of cysteine residues that bind various heavy metals.</text>
</comment>
<comment type="similarity">
    <text evidence="1">Belongs to the metallothionein superfamily. Type 15 family.</text>
</comment>
<organism>
    <name type="scientific">Solanum lycopersicum</name>
    <name type="common">Tomato</name>
    <name type="synonym">Lycopersicon esculentum</name>
    <dbReference type="NCBI Taxonomy" id="4081"/>
    <lineage>
        <taxon>Eukaryota</taxon>
        <taxon>Viridiplantae</taxon>
        <taxon>Streptophyta</taxon>
        <taxon>Embryophyta</taxon>
        <taxon>Tracheophyta</taxon>
        <taxon>Spermatophyta</taxon>
        <taxon>Magnoliopsida</taxon>
        <taxon>eudicotyledons</taxon>
        <taxon>Gunneridae</taxon>
        <taxon>Pentapetalae</taxon>
        <taxon>asterids</taxon>
        <taxon>lamiids</taxon>
        <taxon>Solanales</taxon>
        <taxon>Solanaceae</taxon>
        <taxon>Solanoideae</taxon>
        <taxon>Solaneae</taxon>
        <taxon>Solanum</taxon>
        <taxon>Solanum subgen. Lycopersicon</taxon>
    </lineage>
</organism>
<reference key="1">
    <citation type="journal article" date="1998" name="Plant Mol. Biol.">
        <title>Structure, expression and chromosomal localisation of the metallothionein-like gene family of tomato.</title>
        <authorList>
            <person name="Giritch A."/>
            <person name="Ganal M."/>
            <person name="Stephan U.W."/>
            <person name="Baumlein H."/>
        </authorList>
    </citation>
    <scope>NUCLEOTIDE SEQUENCE [MRNA]</scope>
    <source>
        <strain>cv. Bonner Beste</strain>
        <tissue>Root</tissue>
    </source>
</reference>
<sequence length="72" mass="7133">MSCCGGSCGCGSGCKCGNGCGGCGMYPDMEKSATFSIVEGVAPVHNYGRVEEKAAGEGCKCGSNCTCDPCNC</sequence>
<name>MT2X_SOLLC</name>
<feature type="chain" id="PRO_0000197400" description="Metallothionein-like protein type 2">
    <location>
        <begin position="1"/>
        <end position="72"/>
    </location>
</feature>
<evidence type="ECO:0000305" key="1"/>
<protein>
    <recommendedName>
        <fullName>Metallothionein-like protein type 2</fullName>
    </recommendedName>
</protein>
<dbReference type="EMBL" id="Z68309">
    <property type="protein sequence ID" value="CAA92651.1"/>
    <property type="molecule type" value="mRNA"/>
</dbReference>
<dbReference type="PIR" id="T07105">
    <property type="entry name" value="T07105"/>
</dbReference>
<dbReference type="RefSeq" id="NP_001234054.1">
    <property type="nucleotide sequence ID" value="NM_001247125.2"/>
</dbReference>
<dbReference type="STRING" id="4081.Q43512"/>
<dbReference type="PaxDb" id="4081-Solyc04g058100.2.1"/>
<dbReference type="EnsemblPlants" id="Solyc04g058100.3.1">
    <property type="protein sequence ID" value="Solyc04g058100.3.1"/>
    <property type="gene ID" value="Solyc04g058100.3"/>
</dbReference>
<dbReference type="GeneID" id="778300"/>
<dbReference type="Gramene" id="Solyc04g058100.3.1">
    <property type="protein sequence ID" value="Solyc04g058100.3.1"/>
    <property type="gene ID" value="Solyc04g058100.3"/>
</dbReference>
<dbReference type="KEGG" id="sly:778300"/>
<dbReference type="eggNOG" id="KOG4738">
    <property type="taxonomic scope" value="Eukaryota"/>
</dbReference>
<dbReference type="HOGENOM" id="CLU_161105_1_0_1"/>
<dbReference type="InParanoid" id="Q43512"/>
<dbReference type="OMA" id="NEGSEMN"/>
<dbReference type="OrthoDB" id="1111048at2759"/>
<dbReference type="PhylomeDB" id="Q43512"/>
<dbReference type="Proteomes" id="UP000004994">
    <property type="component" value="Chromosome 4"/>
</dbReference>
<dbReference type="GO" id="GO:0046872">
    <property type="term" value="F:metal ion binding"/>
    <property type="evidence" value="ECO:0007669"/>
    <property type="project" value="UniProtKB-KW"/>
</dbReference>
<dbReference type="InterPro" id="IPR000347">
    <property type="entry name" value="Metalthion_15p"/>
</dbReference>
<dbReference type="PANTHER" id="PTHR33543">
    <property type="entry name" value="METALLOTHIONEIN-LIKE PROTEIN 2A"/>
    <property type="match status" value="1"/>
</dbReference>
<dbReference type="PANTHER" id="PTHR33543:SF37">
    <property type="entry name" value="METALLOTHIONEIN-LIKE PROTEIN 4B"/>
    <property type="match status" value="1"/>
</dbReference>
<dbReference type="Pfam" id="PF01439">
    <property type="entry name" value="Metallothio_2"/>
    <property type="match status" value="1"/>
</dbReference>